<feature type="chain" id="PRO_1000096179" description="Elongation factor P">
    <location>
        <begin position="1"/>
        <end position="187"/>
    </location>
</feature>
<name>EFP_MYCAP</name>
<reference key="1">
    <citation type="journal article" date="2007" name="PLoS Genet.">
        <title>Being pathogenic, plastic, and sexual while living with a nearly minimal bacterial genome.</title>
        <authorList>
            <person name="Sirand-Pugnet P."/>
            <person name="Lartigue C."/>
            <person name="Marenda M."/>
            <person name="Jacob D."/>
            <person name="Barre A."/>
            <person name="Barbe V."/>
            <person name="Schenowitz C."/>
            <person name="Mangenot S."/>
            <person name="Couloux A."/>
            <person name="Segurens B."/>
            <person name="de Daruvar A."/>
            <person name="Blanchard A."/>
            <person name="Citti C."/>
        </authorList>
    </citation>
    <scope>NUCLEOTIDE SEQUENCE [LARGE SCALE GENOMIC DNA]</scope>
    <source>
        <strain>NCTC 10123 / CIP 59.7 / PG2</strain>
    </source>
</reference>
<sequence length="187" mass="20968">MINVNTFKPGITFEDDGDIFVVLEAQHSKQGRGQANVKAKVKNLRTGSTVIKSYTGGVMVSRAHIDKRPMSYLYSDGENIILMDTETYEQVEIPVSHVEWELNFLKEGMIVKIRKYKEEILDIELDANVVLEVTEAPDAVKGNTANNPQKKVKLETGFELETPMFISEGEKIIVSTETGKYVGRANK</sequence>
<organism>
    <name type="scientific">Mycoplasmopsis agalactiae (strain NCTC 10123 / CIP 59.7 / PG2)</name>
    <name type="common">Mycoplasma agalactiae</name>
    <dbReference type="NCBI Taxonomy" id="347257"/>
    <lineage>
        <taxon>Bacteria</taxon>
        <taxon>Bacillati</taxon>
        <taxon>Mycoplasmatota</taxon>
        <taxon>Mycoplasmoidales</taxon>
        <taxon>Metamycoplasmataceae</taxon>
        <taxon>Mycoplasmopsis</taxon>
    </lineage>
</organism>
<proteinExistence type="inferred from homology"/>
<gene>
    <name evidence="1" type="primary">efp</name>
    <name type="ordered locus">MAG3080</name>
</gene>
<evidence type="ECO:0000255" key="1">
    <source>
        <dbReference type="HAMAP-Rule" id="MF_00141"/>
    </source>
</evidence>
<comment type="function">
    <text evidence="1">Involved in peptide bond synthesis. Stimulates efficient translation and peptide-bond synthesis on native or reconstituted 70S ribosomes in vitro. Probably functions indirectly by altering the affinity of the ribosome for aminoacyl-tRNA, thus increasing their reactivity as acceptors for peptidyl transferase.</text>
</comment>
<comment type="pathway">
    <text evidence="1">Protein biosynthesis; polypeptide chain elongation.</text>
</comment>
<comment type="subcellular location">
    <subcellularLocation>
        <location evidence="1">Cytoplasm</location>
    </subcellularLocation>
</comment>
<comment type="similarity">
    <text evidence="1">Belongs to the elongation factor P family.</text>
</comment>
<keyword id="KW-0963">Cytoplasm</keyword>
<keyword id="KW-0251">Elongation factor</keyword>
<keyword id="KW-0648">Protein biosynthesis</keyword>
<keyword id="KW-1185">Reference proteome</keyword>
<dbReference type="EMBL" id="CU179680">
    <property type="protein sequence ID" value="CAL59006.1"/>
    <property type="molecule type" value="Genomic_DNA"/>
</dbReference>
<dbReference type="RefSeq" id="WP_004024464.1">
    <property type="nucleotide sequence ID" value="NC_009497.1"/>
</dbReference>
<dbReference type="SMR" id="A5IY97"/>
<dbReference type="STRING" id="347257.MAG3080"/>
<dbReference type="GeneID" id="93358071"/>
<dbReference type="KEGG" id="maa:MAG3080"/>
<dbReference type="HOGENOM" id="CLU_074944_2_1_14"/>
<dbReference type="UniPathway" id="UPA00345"/>
<dbReference type="Proteomes" id="UP000007065">
    <property type="component" value="Chromosome"/>
</dbReference>
<dbReference type="GO" id="GO:0005737">
    <property type="term" value="C:cytoplasm"/>
    <property type="evidence" value="ECO:0007669"/>
    <property type="project" value="UniProtKB-SubCell"/>
</dbReference>
<dbReference type="GO" id="GO:0003746">
    <property type="term" value="F:translation elongation factor activity"/>
    <property type="evidence" value="ECO:0007669"/>
    <property type="project" value="UniProtKB-UniRule"/>
</dbReference>
<dbReference type="GO" id="GO:0043043">
    <property type="term" value="P:peptide biosynthetic process"/>
    <property type="evidence" value="ECO:0007669"/>
    <property type="project" value="InterPro"/>
</dbReference>
<dbReference type="CDD" id="cd04470">
    <property type="entry name" value="S1_EF-P_repeat_1"/>
    <property type="match status" value="1"/>
</dbReference>
<dbReference type="FunFam" id="2.30.30.30:FF:000003">
    <property type="entry name" value="Elongation factor P"/>
    <property type="match status" value="1"/>
</dbReference>
<dbReference type="FunFam" id="2.40.50.140:FF:000004">
    <property type="entry name" value="Elongation factor P"/>
    <property type="match status" value="1"/>
</dbReference>
<dbReference type="FunFam" id="2.40.50.140:FF:000009">
    <property type="entry name" value="Elongation factor P"/>
    <property type="match status" value="1"/>
</dbReference>
<dbReference type="Gene3D" id="2.30.30.30">
    <property type="match status" value="1"/>
</dbReference>
<dbReference type="Gene3D" id="2.40.50.140">
    <property type="entry name" value="Nucleic acid-binding proteins"/>
    <property type="match status" value="2"/>
</dbReference>
<dbReference type="HAMAP" id="MF_00141">
    <property type="entry name" value="EF_P"/>
    <property type="match status" value="1"/>
</dbReference>
<dbReference type="InterPro" id="IPR015365">
    <property type="entry name" value="Elong-fact-P_C"/>
</dbReference>
<dbReference type="InterPro" id="IPR012340">
    <property type="entry name" value="NA-bd_OB-fold"/>
</dbReference>
<dbReference type="InterPro" id="IPR014722">
    <property type="entry name" value="Rib_uL2_dom2"/>
</dbReference>
<dbReference type="InterPro" id="IPR020599">
    <property type="entry name" value="Transl_elong_fac_P/YeiP"/>
</dbReference>
<dbReference type="InterPro" id="IPR013185">
    <property type="entry name" value="Transl_elong_KOW-like"/>
</dbReference>
<dbReference type="InterPro" id="IPR001059">
    <property type="entry name" value="Transl_elong_P/YeiP_cen"/>
</dbReference>
<dbReference type="InterPro" id="IPR011768">
    <property type="entry name" value="Transl_elongation_fac_P"/>
</dbReference>
<dbReference type="InterPro" id="IPR008991">
    <property type="entry name" value="Translation_prot_SH3-like_sf"/>
</dbReference>
<dbReference type="NCBIfam" id="TIGR00038">
    <property type="entry name" value="efp"/>
    <property type="match status" value="1"/>
</dbReference>
<dbReference type="NCBIfam" id="NF001810">
    <property type="entry name" value="PRK00529.1"/>
    <property type="match status" value="1"/>
</dbReference>
<dbReference type="PANTHER" id="PTHR30053">
    <property type="entry name" value="ELONGATION FACTOR P"/>
    <property type="match status" value="1"/>
</dbReference>
<dbReference type="PANTHER" id="PTHR30053:SF12">
    <property type="entry name" value="ELONGATION FACTOR P (EF-P) FAMILY PROTEIN"/>
    <property type="match status" value="1"/>
</dbReference>
<dbReference type="Pfam" id="PF01132">
    <property type="entry name" value="EFP"/>
    <property type="match status" value="1"/>
</dbReference>
<dbReference type="Pfam" id="PF08207">
    <property type="entry name" value="EFP_N"/>
    <property type="match status" value="1"/>
</dbReference>
<dbReference type="Pfam" id="PF09285">
    <property type="entry name" value="Elong-fact-P_C"/>
    <property type="match status" value="1"/>
</dbReference>
<dbReference type="PIRSF" id="PIRSF005901">
    <property type="entry name" value="EF-P"/>
    <property type="match status" value="1"/>
</dbReference>
<dbReference type="SMART" id="SM01185">
    <property type="entry name" value="EFP"/>
    <property type="match status" value="1"/>
</dbReference>
<dbReference type="SMART" id="SM00841">
    <property type="entry name" value="Elong-fact-P_C"/>
    <property type="match status" value="1"/>
</dbReference>
<dbReference type="SUPFAM" id="SSF50249">
    <property type="entry name" value="Nucleic acid-binding proteins"/>
    <property type="match status" value="2"/>
</dbReference>
<dbReference type="SUPFAM" id="SSF50104">
    <property type="entry name" value="Translation proteins SH3-like domain"/>
    <property type="match status" value="1"/>
</dbReference>
<protein>
    <recommendedName>
        <fullName evidence="1">Elongation factor P</fullName>
        <shortName evidence="1">EF-P</shortName>
    </recommendedName>
</protein>
<accession>A5IY97</accession>